<comment type="subunit">
    <text>Homodimer.</text>
</comment>
<accession>P42856</accession>
<organism>
    <name type="scientific">Zea mays</name>
    <name type="common">Maize</name>
    <dbReference type="NCBI Taxonomy" id="4577"/>
    <lineage>
        <taxon>Eukaryota</taxon>
        <taxon>Viridiplantae</taxon>
        <taxon>Streptophyta</taxon>
        <taxon>Embryophyta</taxon>
        <taxon>Tracheophyta</taxon>
        <taxon>Spermatophyta</taxon>
        <taxon>Magnoliopsida</taxon>
        <taxon>Liliopsida</taxon>
        <taxon>Poales</taxon>
        <taxon>Poaceae</taxon>
        <taxon>PACMAD clade</taxon>
        <taxon>Panicoideae</taxon>
        <taxon>Andropogonodae</taxon>
        <taxon>Andropogoneae</taxon>
        <taxon>Tripsacinae</taxon>
        <taxon>Zea</taxon>
    </lineage>
</organism>
<protein>
    <recommendedName>
        <fullName>14 kDa zinc-binding protein</fullName>
    </recommendedName>
    <alternativeName>
        <fullName>Protein kinase C inhibitor</fullName>
        <shortName>PKCI</shortName>
    </alternativeName>
</protein>
<dbReference type="EMBL" id="Z29643">
    <property type="protein sequence ID" value="CAA82751.1"/>
    <property type="molecule type" value="mRNA"/>
</dbReference>
<dbReference type="PIR" id="S45368">
    <property type="entry name" value="S45368"/>
</dbReference>
<dbReference type="RefSeq" id="NP_001105498.1">
    <property type="nucleotide sequence ID" value="NM_001112028.1"/>
</dbReference>
<dbReference type="SMR" id="P42856"/>
<dbReference type="FunCoup" id="P42856">
    <property type="interactions" value="3054"/>
</dbReference>
<dbReference type="STRING" id="4577.P42856"/>
<dbReference type="PaxDb" id="4577-GRMZM2G018728_P01"/>
<dbReference type="MaizeGDB" id="104300"/>
<dbReference type="eggNOG" id="KOG3275">
    <property type="taxonomic scope" value="Eukaryota"/>
</dbReference>
<dbReference type="InParanoid" id="P42856"/>
<dbReference type="Proteomes" id="UP000007305">
    <property type="component" value="Unplaced"/>
</dbReference>
<dbReference type="ExpressionAtlas" id="P42856">
    <property type="expression patterns" value="baseline and differential"/>
</dbReference>
<dbReference type="GO" id="GO:0005737">
    <property type="term" value="C:cytoplasm"/>
    <property type="evidence" value="ECO:0000318"/>
    <property type="project" value="GO_Central"/>
</dbReference>
<dbReference type="GO" id="GO:0047627">
    <property type="term" value="F:adenylylsulfatase activity"/>
    <property type="evidence" value="ECO:0000318"/>
    <property type="project" value="GO_Central"/>
</dbReference>
<dbReference type="GO" id="GO:0009150">
    <property type="term" value="P:purine ribonucleotide metabolic process"/>
    <property type="evidence" value="ECO:0000318"/>
    <property type="project" value="GO_Central"/>
</dbReference>
<dbReference type="GO" id="GO:0006790">
    <property type="term" value="P:sulfur compound metabolic process"/>
    <property type="evidence" value="ECO:0000318"/>
    <property type="project" value="GO_Central"/>
</dbReference>
<dbReference type="CDD" id="cd01276">
    <property type="entry name" value="PKCI_related"/>
    <property type="match status" value="1"/>
</dbReference>
<dbReference type="FunFam" id="3.30.428.10:FF:000005">
    <property type="entry name" value="Histidine triad nucleotide-binding protein 1"/>
    <property type="match status" value="1"/>
</dbReference>
<dbReference type="Gene3D" id="3.30.428.10">
    <property type="entry name" value="HIT-like"/>
    <property type="match status" value="1"/>
</dbReference>
<dbReference type="InterPro" id="IPR019808">
    <property type="entry name" value="Histidine_triad_CS"/>
</dbReference>
<dbReference type="InterPro" id="IPR001310">
    <property type="entry name" value="Histidine_triad_HIT"/>
</dbReference>
<dbReference type="InterPro" id="IPR011146">
    <property type="entry name" value="HIT-like"/>
</dbReference>
<dbReference type="InterPro" id="IPR036265">
    <property type="entry name" value="HIT-like_sf"/>
</dbReference>
<dbReference type="PANTHER" id="PTHR23089">
    <property type="entry name" value="HISTIDINE TRIAD HIT PROTEIN"/>
    <property type="match status" value="1"/>
</dbReference>
<dbReference type="Pfam" id="PF01230">
    <property type="entry name" value="HIT"/>
    <property type="match status" value="1"/>
</dbReference>
<dbReference type="PRINTS" id="PR00332">
    <property type="entry name" value="HISTRIAD"/>
</dbReference>
<dbReference type="SUPFAM" id="SSF54197">
    <property type="entry name" value="HIT-like"/>
    <property type="match status" value="1"/>
</dbReference>
<dbReference type="PROSITE" id="PS00892">
    <property type="entry name" value="HIT_1"/>
    <property type="match status" value="1"/>
</dbReference>
<dbReference type="PROSITE" id="PS51084">
    <property type="entry name" value="HIT_2"/>
    <property type="match status" value="1"/>
</dbReference>
<gene>
    <name type="primary">ZBP14</name>
    <name type="synonym">PKCI</name>
</gene>
<evidence type="ECO:0000255" key="1">
    <source>
        <dbReference type="PROSITE-ProRule" id="PRU00464"/>
    </source>
</evidence>
<reference key="1">
    <citation type="journal article" date="1994" name="Biochim. Biophys. Acta">
        <title>Isolation of a maize cDNA encoding a protein with extensive similarity to an inhibitor of protein kinase C and a cyanobacterial open reading frame.</title>
        <authorList>
            <person name="Simpson G.G."/>
            <person name="Clark G.P."/>
            <person name="Brown J.W.S."/>
        </authorList>
    </citation>
    <scope>NUCLEOTIDE SEQUENCE [MRNA]</scope>
    <source>
        <strain>cv. A619</strain>
    </source>
</reference>
<reference key="2">
    <citation type="journal article" date="1995" name="Acta Crystallogr. D">
        <title>Crystallization and preliminary X-ray analysis of maize ZBP14 protein, a member of a new family of zinc-binding proteins.</title>
        <authorList>
            <person name="Xiao B."/>
            <person name="Robinson K."/>
            <person name="Aitken A."/>
            <person name="Hirshberg M."/>
        </authorList>
    </citation>
    <scope>CRYSTALLIZATION</scope>
</reference>
<name>ZB14_MAIZE</name>
<keyword id="KW-1185">Reference proteome</keyword>
<feature type="chain" id="PRO_0000109804" description="14 kDa zinc-binding protein">
    <location>
        <begin position="1"/>
        <end position="128"/>
    </location>
</feature>
<feature type="domain" description="HIT" evidence="1">
    <location>
        <begin position="18"/>
        <end position="128"/>
    </location>
</feature>
<feature type="short sequence motif" description="Histidine triad motif" evidence="1">
    <location>
        <begin position="112"/>
        <end position="116"/>
    </location>
</feature>
<sequence>MSSEKEAALRRLDDSPTIFDKIIKKEIPSTVVYEDEKVLAFRDINPQAPTHILIIPKVKDGLTGLAKAEERHIEILGYLLYVAKVVAKQEGLEDGYRVVINDGPSGCQSVYHIHVHLLGGRQMNWPPG</sequence>
<proteinExistence type="evidence at protein level"/>